<comment type="function">
    <text evidence="1">Catalyzes the reversible transfer of the terminal phosphate group between ATP and AMP. Plays an important role in cellular energy homeostasis and in adenine nucleotide metabolism. Adenylate kinase activity is critical for regulation of the phosphate utilization and the AMP de novo biosynthesis pathways.</text>
</comment>
<comment type="catalytic activity">
    <reaction evidence="1">
        <text>AMP + ATP = 2 ADP</text>
        <dbReference type="Rhea" id="RHEA:12973"/>
        <dbReference type="ChEBI" id="CHEBI:30616"/>
        <dbReference type="ChEBI" id="CHEBI:456215"/>
        <dbReference type="ChEBI" id="CHEBI:456216"/>
        <dbReference type="EC" id="2.7.4.3"/>
    </reaction>
</comment>
<comment type="subunit">
    <text evidence="1">Monomer.</text>
</comment>
<comment type="subcellular location">
    <subcellularLocation>
        <location evidence="1">Cytoplasm</location>
        <location evidence="1">Cytosol</location>
    </subcellularLocation>
    <subcellularLocation>
        <location evidence="1">Mitochondrion intermembrane space</location>
    </subcellularLocation>
    <text evidence="1">Predominantly mitochondrial.</text>
</comment>
<comment type="domain">
    <text evidence="1">Consists of three domains, a large central CORE domain and two small peripheral domains, NMPbind and LID, which undergo movements during catalysis. The LID domain closes over the site of phosphoryl transfer upon ATP binding. Assembling and dissambling the active center during each catalytic cycle provides an effective means to prevent ATP hydrolysis.</text>
</comment>
<comment type="similarity">
    <text evidence="1">Belongs to the adenylate kinase family. AK2 subfamily.</text>
</comment>
<accession>Q6BLN9</accession>
<keyword id="KW-0067">ATP-binding</keyword>
<keyword id="KW-0963">Cytoplasm</keyword>
<keyword id="KW-0418">Kinase</keyword>
<keyword id="KW-0496">Mitochondrion</keyword>
<keyword id="KW-0547">Nucleotide-binding</keyword>
<keyword id="KW-1185">Reference proteome</keyword>
<keyword id="KW-0808">Transferase</keyword>
<reference key="1">
    <citation type="journal article" date="2004" name="Nature">
        <title>Genome evolution in yeasts.</title>
        <authorList>
            <person name="Dujon B."/>
            <person name="Sherman D."/>
            <person name="Fischer G."/>
            <person name="Durrens P."/>
            <person name="Casaregola S."/>
            <person name="Lafontaine I."/>
            <person name="de Montigny J."/>
            <person name="Marck C."/>
            <person name="Neuveglise C."/>
            <person name="Talla E."/>
            <person name="Goffard N."/>
            <person name="Frangeul L."/>
            <person name="Aigle M."/>
            <person name="Anthouard V."/>
            <person name="Babour A."/>
            <person name="Barbe V."/>
            <person name="Barnay S."/>
            <person name="Blanchin S."/>
            <person name="Beckerich J.-M."/>
            <person name="Beyne E."/>
            <person name="Bleykasten C."/>
            <person name="Boisrame A."/>
            <person name="Boyer J."/>
            <person name="Cattolico L."/>
            <person name="Confanioleri F."/>
            <person name="de Daruvar A."/>
            <person name="Despons L."/>
            <person name="Fabre E."/>
            <person name="Fairhead C."/>
            <person name="Ferry-Dumazet H."/>
            <person name="Groppi A."/>
            <person name="Hantraye F."/>
            <person name="Hennequin C."/>
            <person name="Jauniaux N."/>
            <person name="Joyet P."/>
            <person name="Kachouri R."/>
            <person name="Kerrest A."/>
            <person name="Koszul R."/>
            <person name="Lemaire M."/>
            <person name="Lesur I."/>
            <person name="Ma L."/>
            <person name="Muller H."/>
            <person name="Nicaud J.-M."/>
            <person name="Nikolski M."/>
            <person name="Oztas S."/>
            <person name="Ozier-Kalogeropoulos O."/>
            <person name="Pellenz S."/>
            <person name="Potier S."/>
            <person name="Richard G.-F."/>
            <person name="Straub M.-L."/>
            <person name="Suleau A."/>
            <person name="Swennen D."/>
            <person name="Tekaia F."/>
            <person name="Wesolowski-Louvel M."/>
            <person name="Westhof E."/>
            <person name="Wirth B."/>
            <person name="Zeniou-Meyer M."/>
            <person name="Zivanovic Y."/>
            <person name="Bolotin-Fukuhara M."/>
            <person name="Thierry A."/>
            <person name="Bouchier C."/>
            <person name="Caudron B."/>
            <person name="Scarpelli C."/>
            <person name="Gaillardin C."/>
            <person name="Weissenbach J."/>
            <person name="Wincker P."/>
            <person name="Souciet J.-L."/>
        </authorList>
    </citation>
    <scope>NUCLEOTIDE SEQUENCE [LARGE SCALE GENOMIC DNA]</scope>
    <source>
        <strain>ATCC 36239 / CBS 767 / BCRC 21394 / JCM 1990 / NBRC 0083 / IGC 2968</strain>
    </source>
</reference>
<organism>
    <name type="scientific">Debaryomyces hansenii (strain ATCC 36239 / CBS 767 / BCRC 21394 / JCM 1990 / NBRC 0083 / IGC 2968)</name>
    <name type="common">Yeast</name>
    <name type="synonym">Torulaspora hansenii</name>
    <dbReference type="NCBI Taxonomy" id="284592"/>
    <lineage>
        <taxon>Eukaryota</taxon>
        <taxon>Fungi</taxon>
        <taxon>Dikarya</taxon>
        <taxon>Ascomycota</taxon>
        <taxon>Saccharomycotina</taxon>
        <taxon>Pichiomycetes</taxon>
        <taxon>Debaryomycetaceae</taxon>
        <taxon>Debaryomyces</taxon>
    </lineage>
</organism>
<sequence>MSVEDLKATVTKLQDRISYLEQKAGVVPNVPKSVRMVLIGPPGAGKGTQAPNLKEKYCACHLATGDMLRAQVAAKSALGVEAKKIMDQGGLVSDEIMVNMIKSELENNKECSNGFILDGFPRTIPQAEKLDSMLETRKTPLENAVELKIDDELLVARITGRLVHPASGRSYHKLFNPPKKDMIDDVSGDALVQRSDDNEDALKKRLVTYHKQTEPIVDYYRKTGIWSGVDASQKPGKVWDDILKCLGQK</sequence>
<dbReference type="EC" id="2.7.4.3" evidence="1"/>
<dbReference type="EMBL" id="CR382138">
    <property type="protein sequence ID" value="CAG89232.1"/>
    <property type="molecule type" value="Genomic_DNA"/>
</dbReference>
<dbReference type="RefSeq" id="XP_460882.1">
    <property type="nucleotide sequence ID" value="XM_460882.1"/>
</dbReference>
<dbReference type="SMR" id="Q6BLN9"/>
<dbReference type="FunCoup" id="Q6BLN9">
    <property type="interactions" value="871"/>
</dbReference>
<dbReference type="STRING" id="284592.Q6BLN9"/>
<dbReference type="GeneID" id="2904172"/>
<dbReference type="KEGG" id="dha:DEHA2F11924g"/>
<dbReference type="VEuPathDB" id="FungiDB:DEHA2F11924g"/>
<dbReference type="eggNOG" id="KOG3078">
    <property type="taxonomic scope" value="Eukaryota"/>
</dbReference>
<dbReference type="HOGENOM" id="CLU_032354_1_0_1"/>
<dbReference type="InParanoid" id="Q6BLN9"/>
<dbReference type="OMA" id="VYHEQTA"/>
<dbReference type="OrthoDB" id="439792at2759"/>
<dbReference type="Proteomes" id="UP000000599">
    <property type="component" value="Chromosome F"/>
</dbReference>
<dbReference type="GO" id="GO:0005829">
    <property type="term" value="C:cytosol"/>
    <property type="evidence" value="ECO:0007669"/>
    <property type="project" value="UniProtKB-SubCell"/>
</dbReference>
<dbReference type="GO" id="GO:0005758">
    <property type="term" value="C:mitochondrial intermembrane space"/>
    <property type="evidence" value="ECO:0007669"/>
    <property type="project" value="UniProtKB-SubCell"/>
</dbReference>
<dbReference type="GO" id="GO:0004017">
    <property type="term" value="F:adenylate kinase activity"/>
    <property type="evidence" value="ECO:0007669"/>
    <property type="project" value="UniProtKB-UniRule"/>
</dbReference>
<dbReference type="GO" id="GO:0016208">
    <property type="term" value="F:AMP binding"/>
    <property type="evidence" value="ECO:0007669"/>
    <property type="project" value="EnsemblFungi"/>
</dbReference>
<dbReference type="GO" id="GO:0005524">
    <property type="term" value="F:ATP binding"/>
    <property type="evidence" value="ECO:0007669"/>
    <property type="project" value="UniProtKB-KW"/>
</dbReference>
<dbReference type="GO" id="GO:0003688">
    <property type="term" value="F:DNA replication origin binding"/>
    <property type="evidence" value="ECO:0007669"/>
    <property type="project" value="EnsemblFungi"/>
</dbReference>
<dbReference type="GO" id="GO:0006172">
    <property type="term" value="P:ADP biosynthetic process"/>
    <property type="evidence" value="ECO:0007669"/>
    <property type="project" value="UniProtKB-UniRule"/>
</dbReference>
<dbReference type="GO" id="GO:0046033">
    <property type="term" value="P:AMP metabolic process"/>
    <property type="evidence" value="ECO:0007669"/>
    <property type="project" value="UniProtKB-UniRule"/>
</dbReference>
<dbReference type="GO" id="GO:0046034">
    <property type="term" value="P:ATP metabolic process"/>
    <property type="evidence" value="ECO:0007669"/>
    <property type="project" value="UniProtKB-UniRule"/>
</dbReference>
<dbReference type="GO" id="GO:0006270">
    <property type="term" value="P:DNA replication initiation"/>
    <property type="evidence" value="ECO:0007669"/>
    <property type="project" value="EnsemblFungi"/>
</dbReference>
<dbReference type="GO" id="GO:0036388">
    <property type="term" value="P:pre-replicative complex assembly"/>
    <property type="evidence" value="ECO:0007669"/>
    <property type="project" value="EnsemblFungi"/>
</dbReference>
<dbReference type="CDD" id="cd01428">
    <property type="entry name" value="ADK"/>
    <property type="match status" value="1"/>
</dbReference>
<dbReference type="FunFam" id="3.40.50.300:FF:000106">
    <property type="entry name" value="Adenylate kinase mitochondrial"/>
    <property type="match status" value="1"/>
</dbReference>
<dbReference type="Gene3D" id="3.40.50.300">
    <property type="entry name" value="P-loop containing nucleotide triphosphate hydrolases"/>
    <property type="match status" value="1"/>
</dbReference>
<dbReference type="HAMAP" id="MF_00235">
    <property type="entry name" value="Adenylate_kinase_Adk"/>
    <property type="match status" value="1"/>
</dbReference>
<dbReference type="HAMAP" id="MF_03168">
    <property type="entry name" value="Adenylate_kinase_AK2"/>
    <property type="match status" value="1"/>
</dbReference>
<dbReference type="InterPro" id="IPR006259">
    <property type="entry name" value="Adenyl_kin_sub"/>
</dbReference>
<dbReference type="InterPro" id="IPR000850">
    <property type="entry name" value="Adenylat/UMP-CMP_kin"/>
</dbReference>
<dbReference type="InterPro" id="IPR033690">
    <property type="entry name" value="Adenylat_kinase_CS"/>
</dbReference>
<dbReference type="InterPro" id="IPR007862">
    <property type="entry name" value="Adenylate_kinase_lid-dom"/>
</dbReference>
<dbReference type="InterPro" id="IPR028587">
    <property type="entry name" value="AK2"/>
</dbReference>
<dbReference type="InterPro" id="IPR027417">
    <property type="entry name" value="P-loop_NTPase"/>
</dbReference>
<dbReference type="NCBIfam" id="TIGR01351">
    <property type="entry name" value="adk"/>
    <property type="match status" value="1"/>
</dbReference>
<dbReference type="NCBIfam" id="NF001380">
    <property type="entry name" value="PRK00279.1-2"/>
    <property type="match status" value="1"/>
</dbReference>
<dbReference type="NCBIfam" id="NF001381">
    <property type="entry name" value="PRK00279.1-3"/>
    <property type="match status" value="1"/>
</dbReference>
<dbReference type="NCBIfam" id="NF011100">
    <property type="entry name" value="PRK14527.1"/>
    <property type="match status" value="1"/>
</dbReference>
<dbReference type="PANTHER" id="PTHR23359">
    <property type="entry name" value="NUCLEOTIDE KINASE"/>
    <property type="match status" value="1"/>
</dbReference>
<dbReference type="Pfam" id="PF00406">
    <property type="entry name" value="ADK"/>
    <property type="match status" value="1"/>
</dbReference>
<dbReference type="Pfam" id="PF05191">
    <property type="entry name" value="ADK_lid"/>
    <property type="match status" value="1"/>
</dbReference>
<dbReference type="PRINTS" id="PR00094">
    <property type="entry name" value="ADENYLTKNASE"/>
</dbReference>
<dbReference type="SUPFAM" id="SSF52540">
    <property type="entry name" value="P-loop containing nucleoside triphosphate hydrolases"/>
    <property type="match status" value="1"/>
</dbReference>
<dbReference type="PROSITE" id="PS00113">
    <property type="entry name" value="ADENYLATE_KINASE"/>
    <property type="match status" value="1"/>
</dbReference>
<proteinExistence type="inferred from homology"/>
<protein>
    <recommendedName>
        <fullName evidence="1">Adenylate kinase</fullName>
        <ecNumber evidence="1">2.7.4.3</ecNumber>
    </recommendedName>
    <alternativeName>
        <fullName evidence="1">ATP-AMP transphosphorylase</fullName>
    </alternativeName>
    <alternativeName>
        <fullName evidence="1">ATP:AMP phosphotransferase</fullName>
    </alternativeName>
    <alternativeName>
        <fullName evidence="1">Adenylate kinase cytosolic and mitochondrial</fullName>
    </alternativeName>
    <alternativeName>
        <fullName evidence="1">Adenylate monophosphate kinase</fullName>
    </alternativeName>
</protein>
<feature type="chain" id="PRO_0000365673" description="Adenylate kinase">
    <location>
        <begin position="1"/>
        <end position="249"/>
    </location>
</feature>
<feature type="region of interest" description="NMP" evidence="1">
    <location>
        <begin position="63"/>
        <end position="92"/>
    </location>
</feature>
<feature type="region of interest" description="LID" evidence="1">
    <location>
        <begin position="160"/>
        <end position="197"/>
    </location>
</feature>
<feature type="binding site" evidence="1">
    <location>
        <begin position="43"/>
        <end position="48"/>
    </location>
    <ligand>
        <name>ATP</name>
        <dbReference type="ChEBI" id="CHEBI:30616"/>
    </ligand>
</feature>
<feature type="binding site" evidence="1">
    <location>
        <position position="64"/>
    </location>
    <ligand>
        <name>AMP</name>
        <dbReference type="ChEBI" id="CHEBI:456215"/>
    </ligand>
</feature>
<feature type="binding site" evidence="1">
    <location>
        <position position="69"/>
    </location>
    <ligand>
        <name>AMP</name>
        <dbReference type="ChEBI" id="CHEBI:456215"/>
    </ligand>
</feature>
<feature type="binding site" evidence="1">
    <location>
        <begin position="90"/>
        <end position="92"/>
    </location>
    <ligand>
        <name>AMP</name>
        <dbReference type="ChEBI" id="CHEBI:456215"/>
    </ligand>
</feature>
<feature type="binding site" evidence="1">
    <location>
        <begin position="119"/>
        <end position="122"/>
    </location>
    <ligand>
        <name>AMP</name>
        <dbReference type="ChEBI" id="CHEBI:456215"/>
    </ligand>
</feature>
<feature type="binding site" evidence="1">
    <location>
        <position position="126"/>
    </location>
    <ligand>
        <name>AMP</name>
        <dbReference type="ChEBI" id="CHEBI:456215"/>
    </ligand>
</feature>
<feature type="binding site" evidence="1">
    <location>
        <position position="161"/>
    </location>
    <ligand>
        <name>ATP</name>
        <dbReference type="ChEBI" id="CHEBI:30616"/>
    </ligand>
</feature>
<feature type="binding site" evidence="1">
    <location>
        <begin position="170"/>
        <end position="171"/>
    </location>
    <ligand>
        <name>ATP</name>
        <dbReference type="ChEBI" id="CHEBI:30616"/>
    </ligand>
</feature>
<feature type="binding site" evidence="1">
    <location>
        <position position="194"/>
    </location>
    <ligand>
        <name>AMP</name>
        <dbReference type="ChEBI" id="CHEBI:456215"/>
    </ligand>
</feature>
<feature type="binding site" evidence="1">
    <location>
        <position position="205"/>
    </location>
    <ligand>
        <name>AMP</name>
        <dbReference type="ChEBI" id="CHEBI:456215"/>
    </ligand>
</feature>
<feature type="binding site" evidence="1">
    <location>
        <position position="233"/>
    </location>
    <ligand>
        <name>ATP</name>
        <dbReference type="ChEBI" id="CHEBI:30616"/>
    </ligand>
</feature>
<gene>
    <name evidence="1" type="primary">ADK1</name>
    <name type="ordered locus">DEHA2F11924g</name>
</gene>
<name>KAD2_DEBHA</name>
<evidence type="ECO:0000255" key="1">
    <source>
        <dbReference type="HAMAP-Rule" id="MF_03168"/>
    </source>
</evidence>